<feature type="chain" id="PRO_0000079033" description="Nucleoprotein">
    <location>
        <begin position="1"/>
        <end position="498"/>
    </location>
</feature>
<feature type="region of interest" description="Disordered" evidence="2">
    <location>
        <begin position="1"/>
        <end position="21"/>
    </location>
</feature>
<feature type="short sequence motif" description="Unconventional nuclear localization signal" evidence="1">
    <location>
        <begin position="1"/>
        <end position="18"/>
    </location>
</feature>
<feature type="short sequence motif" description="Bipartite nuclear localization signal" evidence="1">
    <location>
        <begin position="198"/>
        <end position="216"/>
    </location>
</feature>
<name>NCAP_I78A5</name>
<comment type="function">
    <text evidence="1">Encapsidates the negative strand viral RNA, protecting it from nucleases. The encapsidated genomic RNA is termed the ribonucleoprotein (RNP) and serves as template for transcription and replication. The RNP needs to be localized in the host nucleus to start an infectious cycle, but is too large to diffuse through the nuclear pore complex. NP comprises at least 2 nuclear localization signals that are responsible for the active RNP import into the nucleus through cellular importin alpha/beta pathway. Later in the infection, nclear export of RNPs are mediated through viral proteins NEP interacting with M1 which binds nucleoproteins. It is possible that nucleoprotein binds directly host exportin-1/XPO1 and plays an active role in RNPs nuclear export. M1 interaction with RNP seems to hide nucleoprotein's nuclear localization signals. Soon after a virion infects a new cell, M1 dissociates from the RNP under acidification of the virion driven by M2 protein. Dissociation of M1 from RNP unmasks nucleoprotein's nuclear localization signals, targeting the RNP to the nucleus.</text>
</comment>
<comment type="subunit">
    <text evidence="1">Homomultimerizes to form the nucleocapsid. May bind host exportin-1/XPO1. Binds to viral genomic RNA. Protein-RNA contacts are mediated by a combination of electrostatic interactions between positively charged residues and the phosphate backbone and planar interactions between aromatic side chains and bases.</text>
</comment>
<comment type="subcellular location">
    <subcellularLocation>
        <location evidence="1">Virion</location>
    </subcellularLocation>
    <subcellularLocation>
        <location evidence="1">Host nucleus</location>
    </subcellularLocation>
</comment>
<comment type="PTM">
    <text evidence="1">Late in virus-infected cells, may be cleaved from a 56-kDa protein to a 53-kDa protein by a cellular caspase. This cleavage might be a marker for the onset of apoptosis in infected cells or have a specific function in virus host interaction.</text>
</comment>
<comment type="similarity">
    <text evidence="1">Belongs to the influenza viruses nucleoprotein family.</text>
</comment>
<evidence type="ECO:0000255" key="1">
    <source>
        <dbReference type="HAMAP-Rule" id="MF_04070"/>
    </source>
</evidence>
<evidence type="ECO:0000256" key="2">
    <source>
        <dbReference type="SAM" id="MobiDB-lite"/>
    </source>
</evidence>
<sequence>MASQGTKRSYEQMETGGERQNATEIRASVGRMVGGIGRFYIQMCTELKLSDYEGRLIQNSITIERMVLSAFDERRNKYLEEHPSAGKDPKKTGGPIYRRRDGKWMRELILYDKEEIRRIWRQANNGEDATAGLTHLMIWHSNLNDATYQRTRALVRTGMDPRMCSLMQGSTLPRRSGAAGAAVKGVGTMVMELIRMIKRGINDRNFWRGENGRRTRIAYERMCNILKGKFQTAAQRAMMDQVRESRNPGNAEIEDLIFLARSALILRGSVAHKSCLPACVYGLAVASGYDFEREGYSLVGIDPFRLLQNSQVFSLIRPNENPAHKSQLVWMACHSAAFEDLRVSSFIRGARVVPRGQLSTRGVQIASNENMETMDSSTLELRSRYWAIRTRSGGNTNQQRASAGQISVQPTFSVQRNLPFERATIMAAFTGNTEGRTSDMRTEIIRMMESARPEDVSFQGRGVFELSDEKATNPIVPSFDMSNEGSYFFGDNAEEYDN</sequence>
<gene>
    <name evidence="1" type="primary">NP</name>
</gene>
<reference key="1">
    <citation type="journal article" date="1991" name="J. Virol.">
        <title>Evolution of influenza A virus nucleoprotein genes: implications for the origins of H1N1 human and classical swine viruses.</title>
        <authorList>
            <person name="Gorman O.T."/>
            <person name="Bean W.J."/>
            <person name="Kawaoka Y."/>
            <person name="Donatelli I."/>
            <person name="Guo Y."/>
            <person name="Webster R.G."/>
        </authorList>
    </citation>
    <scope>NUCLEOTIDE SEQUENCE [GENOMIC RNA]</scope>
</reference>
<proteinExistence type="inferred from homology"/>
<organismHost>
    <name type="scientific">Aves</name>
    <dbReference type="NCBI Taxonomy" id="8782"/>
</organismHost>
<dbReference type="EMBL" id="M63782">
    <property type="protein sequence ID" value="AAA52243.1"/>
    <property type="molecule type" value="Genomic_RNA"/>
</dbReference>
<dbReference type="SMR" id="P26064"/>
<dbReference type="GO" id="GO:0019029">
    <property type="term" value="C:helical viral capsid"/>
    <property type="evidence" value="ECO:0007669"/>
    <property type="project" value="UniProtKB-UniRule"/>
</dbReference>
<dbReference type="GO" id="GO:0043657">
    <property type="term" value="C:host cell"/>
    <property type="evidence" value="ECO:0007669"/>
    <property type="project" value="GOC"/>
</dbReference>
<dbReference type="GO" id="GO:0042025">
    <property type="term" value="C:host cell nucleus"/>
    <property type="evidence" value="ECO:0007669"/>
    <property type="project" value="UniProtKB-SubCell"/>
</dbReference>
<dbReference type="GO" id="GO:1990904">
    <property type="term" value="C:ribonucleoprotein complex"/>
    <property type="evidence" value="ECO:0007669"/>
    <property type="project" value="UniProtKB-KW"/>
</dbReference>
<dbReference type="GO" id="GO:0019013">
    <property type="term" value="C:viral nucleocapsid"/>
    <property type="evidence" value="ECO:0007669"/>
    <property type="project" value="UniProtKB-UniRule"/>
</dbReference>
<dbReference type="GO" id="GO:0003723">
    <property type="term" value="F:RNA binding"/>
    <property type="evidence" value="ECO:0007669"/>
    <property type="project" value="UniProtKB-UniRule"/>
</dbReference>
<dbReference type="GO" id="GO:0005198">
    <property type="term" value="F:structural molecule activity"/>
    <property type="evidence" value="ECO:0007669"/>
    <property type="project" value="UniProtKB-UniRule"/>
</dbReference>
<dbReference type="GO" id="GO:0046718">
    <property type="term" value="P:symbiont entry into host cell"/>
    <property type="evidence" value="ECO:0007669"/>
    <property type="project" value="UniProtKB-KW"/>
</dbReference>
<dbReference type="GO" id="GO:0075732">
    <property type="term" value="P:viral penetration into host nucleus"/>
    <property type="evidence" value="ECO:0007669"/>
    <property type="project" value="UniProtKB-UniRule"/>
</dbReference>
<dbReference type="HAMAP" id="MF_04070">
    <property type="entry name" value="INFV_NCAP"/>
    <property type="match status" value="1"/>
</dbReference>
<dbReference type="InterPro" id="IPR002141">
    <property type="entry name" value="Flu_NP"/>
</dbReference>
<dbReference type="Pfam" id="PF00506">
    <property type="entry name" value="Flu_NP"/>
    <property type="match status" value="1"/>
</dbReference>
<dbReference type="SUPFAM" id="SSF161003">
    <property type="entry name" value="flu NP-like"/>
    <property type="match status" value="1"/>
</dbReference>
<organism>
    <name type="scientific">Influenza A virus (strain A/Duck/Beijing/1/1978 H3N6)</name>
    <dbReference type="NCBI Taxonomy" id="383548"/>
    <lineage>
        <taxon>Viruses</taxon>
        <taxon>Riboviria</taxon>
        <taxon>Orthornavirae</taxon>
        <taxon>Negarnaviricota</taxon>
        <taxon>Polyploviricotina</taxon>
        <taxon>Insthoviricetes</taxon>
        <taxon>Articulavirales</taxon>
        <taxon>Orthomyxoviridae</taxon>
        <taxon>Alphainfluenzavirus</taxon>
        <taxon>Alphainfluenzavirus influenzae</taxon>
        <taxon>Influenza A virus</taxon>
    </lineage>
</organism>
<accession>P26064</accession>
<protein>
    <recommendedName>
        <fullName evidence="1">Nucleoprotein</fullName>
    </recommendedName>
    <alternativeName>
        <fullName evidence="1">Nucleocapsid protein</fullName>
        <shortName evidence="1">Protein N</shortName>
    </alternativeName>
</protein>
<keyword id="KW-0167">Capsid protein</keyword>
<keyword id="KW-1139">Helical capsid protein</keyword>
<keyword id="KW-1048">Host nucleus</keyword>
<keyword id="KW-0945">Host-virus interaction</keyword>
<keyword id="KW-0687">Ribonucleoprotein</keyword>
<keyword id="KW-0694">RNA-binding</keyword>
<keyword id="KW-0543">Viral nucleoprotein</keyword>
<keyword id="KW-1163">Viral penetration into host nucleus</keyword>
<keyword id="KW-0946">Virion</keyword>
<keyword id="KW-1160">Virus entry into host cell</keyword>